<evidence type="ECO:0000255" key="1">
    <source>
        <dbReference type="HAMAP-Rule" id="MF_01369"/>
    </source>
</evidence>
<evidence type="ECO:0000305" key="2"/>
<organism>
    <name type="scientific">Burkholderia mallei (strain ATCC 23344)</name>
    <dbReference type="NCBI Taxonomy" id="243160"/>
    <lineage>
        <taxon>Bacteria</taxon>
        <taxon>Pseudomonadati</taxon>
        <taxon>Pseudomonadota</taxon>
        <taxon>Betaproteobacteria</taxon>
        <taxon>Burkholderiales</taxon>
        <taxon>Burkholderiaceae</taxon>
        <taxon>Burkholderia</taxon>
        <taxon>pseudomallei group</taxon>
    </lineage>
</organism>
<name>RL23_BURMA</name>
<protein>
    <recommendedName>
        <fullName evidence="1">Large ribosomal subunit protein uL23</fullName>
    </recommendedName>
    <alternativeName>
        <fullName evidence="2">50S ribosomal protein L23</fullName>
    </alternativeName>
</protein>
<feature type="chain" id="PRO_0000272721" description="Large ribosomal subunit protein uL23">
    <location>
        <begin position="1"/>
        <end position="104"/>
    </location>
</feature>
<sequence length="104" mass="11740">MSEIRKNDHRLMQVLLAPVISEKATLVADKNEQVVFEVAPDATKQEVKAAVELLFKVEVDSVNVLVQKGKQKRFGRSMGRRKDVKKAYVCLKPGQEINFEAEAK</sequence>
<gene>
    <name evidence="1" type="primary">rplW</name>
    <name type="ordered locus">BMA2630</name>
</gene>
<dbReference type="EMBL" id="CP000010">
    <property type="protein sequence ID" value="AAU47868.1"/>
    <property type="molecule type" value="Genomic_DNA"/>
</dbReference>
<dbReference type="RefSeq" id="WP_004199275.1">
    <property type="nucleotide sequence ID" value="NC_006348.1"/>
</dbReference>
<dbReference type="RefSeq" id="YP_104164.1">
    <property type="nucleotide sequence ID" value="NC_006348.1"/>
</dbReference>
<dbReference type="SMR" id="Q62GK7"/>
<dbReference type="GeneID" id="98107158"/>
<dbReference type="KEGG" id="bma:BMA2630"/>
<dbReference type="PATRIC" id="fig|243160.12.peg.2701"/>
<dbReference type="eggNOG" id="COG0089">
    <property type="taxonomic scope" value="Bacteria"/>
</dbReference>
<dbReference type="HOGENOM" id="CLU_037562_3_1_4"/>
<dbReference type="PRO" id="PR:Q62GK7"/>
<dbReference type="Proteomes" id="UP000006693">
    <property type="component" value="Chromosome 1"/>
</dbReference>
<dbReference type="GO" id="GO:1990904">
    <property type="term" value="C:ribonucleoprotein complex"/>
    <property type="evidence" value="ECO:0007669"/>
    <property type="project" value="UniProtKB-KW"/>
</dbReference>
<dbReference type="GO" id="GO:0005840">
    <property type="term" value="C:ribosome"/>
    <property type="evidence" value="ECO:0007669"/>
    <property type="project" value="UniProtKB-KW"/>
</dbReference>
<dbReference type="GO" id="GO:0019843">
    <property type="term" value="F:rRNA binding"/>
    <property type="evidence" value="ECO:0007669"/>
    <property type="project" value="UniProtKB-UniRule"/>
</dbReference>
<dbReference type="GO" id="GO:0003735">
    <property type="term" value="F:structural constituent of ribosome"/>
    <property type="evidence" value="ECO:0007669"/>
    <property type="project" value="InterPro"/>
</dbReference>
<dbReference type="GO" id="GO:0006412">
    <property type="term" value="P:translation"/>
    <property type="evidence" value="ECO:0007669"/>
    <property type="project" value="UniProtKB-UniRule"/>
</dbReference>
<dbReference type="FunFam" id="3.30.70.330:FF:000001">
    <property type="entry name" value="50S ribosomal protein L23"/>
    <property type="match status" value="1"/>
</dbReference>
<dbReference type="Gene3D" id="3.30.70.330">
    <property type="match status" value="1"/>
</dbReference>
<dbReference type="HAMAP" id="MF_01369_B">
    <property type="entry name" value="Ribosomal_uL23_B"/>
    <property type="match status" value="1"/>
</dbReference>
<dbReference type="InterPro" id="IPR012677">
    <property type="entry name" value="Nucleotide-bd_a/b_plait_sf"/>
</dbReference>
<dbReference type="InterPro" id="IPR013025">
    <property type="entry name" value="Ribosomal_uL23-like"/>
</dbReference>
<dbReference type="InterPro" id="IPR012678">
    <property type="entry name" value="Ribosomal_uL23/eL15/eS24_sf"/>
</dbReference>
<dbReference type="NCBIfam" id="NF004359">
    <property type="entry name" value="PRK05738.1-3"/>
    <property type="match status" value="1"/>
</dbReference>
<dbReference type="NCBIfam" id="NF004363">
    <property type="entry name" value="PRK05738.2-4"/>
    <property type="match status" value="1"/>
</dbReference>
<dbReference type="PANTHER" id="PTHR11620">
    <property type="entry name" value="60S RIBOSOMAL PROTEIN L23A"/>
    <property type="match status" value="1"/>
</dbReference>
<dbReference type="Pfam" id="PF00276">
    <property type="entry name" value="Ribosomal_L23"/>
    <property type="match status" value="1"/>
</dbReference>
<dbReference type="SUPFAM" id="SSF54189">
    <property type="entry name" value="Ribosomal proteins S24e, L23 and L15e"/>
    <property type="match status" value="1"/>
</dbReference>
<comment type="function">
    <text evidence="1">One of the early assembly proteins it binds 23S rRNA. One of the proteins that surrounds the polypeptide exit tunnel on the outside of the ribosome. Forms the main docking site for trigger factor binding to the ribosome.</text>
</comment>
<comment type="subunit">
    <text evidence="1">Part of the 50S ribosomal subunit. Contacts protein L29, and trigger factor when it is bound to the ribosome.</text>
</comment>
<comment type="similarity">
    <text evidence="1">Belongs to the universal ribosomal protein uL23 family.</text>
</comment>
<keyword id="KW-1185">Reference proteome</keyword>
<keyword id="KW-0687">Ribonucleoprotein</keyword>
<keyword id="KW-0689">Ribosomal protein</keyword>
<keyword id="KW-0694">RNA-binding</keyword>
<keyword id="KW-0699">rRNA-binding</keyword>
<reference key="1">
    <citation type="journal article" date="2004" name="Proc. Natl. Acad. Sci. U.S.A.">
        <title>Structural flexibility in the Burkholderia mallei genome.</title>
        <authorList>
            <person name="Nierman W.C."/>
            <person name="DeShazer D."/>
            <person name="Kim H.S."/>
            <person name="Tettelin H."/>
            <person name="Nelson K.E."/>
            <person name="Feldblyum T.V."/>
            <person name="Ulrich R.L."/>
            <person name="Ronning C.M."/>
            <person name="Brinkac L.M."/>
            <person name="Daugherty S.C."/>
            <person name="Davidsen T.D."/>
            <person name="DeBoy R.T."/>
            <person name="Dimitrov G."/>
            <person name="Dodson R.J."/>
            <person name="Durkin A.S."/>
            <person name="Gwinn M.L."/>
            <person name="Haft D.H."/>
            <person name="Khouri H.M."/>
            <person name="Kolonay J.F."/>
            <person name="Madupu R."/>
            <person name="Mohammoud Y."/>
            <person name="Nelson W.C."/>
            <person name="Radune D."/>
            <person name="Romero C.M."/>
            <person name="Sarria S."/>
            <person name="Selengut J."/>
            <person name="Shamblin C."/>
            <person name="Sullivan S.A."/>
            <person name="White O."/>
            <person name="Yu Y."/>
            <person name="Zafar N."/>
            <person name="Zhou L."/>
            <person name="Fraser C.M."/>
        </authorList>
    </citation>
    <scope>NUCLEOTIDE SEQUENCE [LARGE SCALE GENOMIC DNA]</scope>
    <source>
        <strain>ATCC 23344</strain>
    </source>
</reference>
<accession>Q62GK7</accession>
<proteinExistence type="inferred from homology"/>